<gene>
    <name type="primary">hcr1</name>
    <name type="ORF">ATEG_02901</name>
</gene>
<sequence length="266" mass="29969">MAPSKWDDEEESTSPPPVAYRRKFDDEEEEDVLDSWDAAEDSEVEREKAAKAAEAKAKAEAEAAAKKKSKAQRIQEHKEERKKREEEDSSSESEEDEAERRARLRRTEKDSDLKHAEDLFGDIDLNRTRNRGAPKAVVVSDSADPTQAVDLSAMPLFKPTTKDQFTRLTTTLAPLLTAHSKKPQYALWAQEFTKQLVKELNSGDVKKIASALTTMSNEKMREERAADKGNKKSKAAKTKVSLVTSRENKIDASYDDDDGLDDDDFM</sequence>
<proteinExistence type="inferred from homology"/>
<name>EIF3J_ASPTN</name>
<dbReference type="EMBL" id="CH476597">
    <property type="protein sequence ID" value="EAU36175.1"/>
    <property type="molecule type" value="Genomic_DNA"/>
</dbReference>
<dbReference type="RefSeq" id="XP_001212079.1">
    <property type="nucleotide sequence ID" value="XM_001212079.1"/>
</dbReference>
<dbReference type="SMR" id="Q0CTT3"/>
<dbReference type="STRING" id="341663.Q0CTT3"/>
<dbReference type="EnsemblFungi" id="EAU36175">
    <property type="protein sequence ID" value="EAU36175"/>
    <property type="gene ID" value="ATEG_02901"/>
</dbReference>
<dbReference type="GeneID" id="4317518"/>
<dbReference type="VEuPathDB" id="FungiDB:ATEG_02901"/>
<dbReference type="eggNOG" id="KOG4813">
    <property type="taxonomic scope" value="Eukaryota"/>
</dbReference>
<dbReference type="HOGENOM" id="CLU_087988_0_0_1"/>
<dbReference type="OMA" id="KPHYALW"/>
<dbReference type="OrthoDB" id="20381at2759"/>
<dbReference type="Proteomes" id="UP000007963">
    <property type="component" value="Unassembled WGS sequence"/>
</dbReference>
<dbReference type="GO" id="GO:0016282">
    <property type="term" value="C:eukaryotic 43S preinitiation complex"/>
    <property type="evidence" value="ECO:0007669"/>
    <property type="project" value="UniProtKB-UniRule"/>
</dbReference>
<dbReference type="GO" id="GO:0033290">
    <property type="term" value="C:eukaryotic 48S preinitiation complex"/>
    <property type="evidence" value="ECO:0007669"/>
    <property type="project" value="UniProtKB-UniRule"/>
</dbReference>
<dbReference type="GO" id="GO:0005852">
    <property type="term" value="C:eukaryotic translation initiation factor 3 complex"/>
    <property type="evidence" value="ECO:0007669"/>
    <property type="project" value="UniProtKB-UniRule"/>
</dbReference>
<dbReference type="GO" id="GO:0003743">
    <property type="term" value="F:translation initiation factor activity"/>
    <property type="evidence" value="ECO:0007669"/>
    <property type="project" value="UniProtKB-UniRule"/>
</dbReference>
<dbReference type="GO" id="GO:0001732">
    <property type="term" value="P:formation of cytoplasmic translation initiation complex"/>
    <property type="evidence" value="ECO:0007669"/>
    <property type="project" value="UniProtKB-UniRule"/>
</dbReference>
<dbReference type="FunFam" id="1.10.246.60:FF:000003">
    <property type="entry name" value="Eukaryotic translation initiation factor 3 subunit J"/>
    <property type="match status" value="1"/>
</dbReference>
<dbReference type="Gene3D" id="1.10.246.60">
    <property type="entry name" value="Eukaryotic translation initiation factor 3 like domains"/>
    <property type="match status" value="1"/>
</dbReference>
<dbReference type="HAMAP" id="MF_03009">
    <property type="entry name" value="eIF3j"/>
    <property type="match status" value="1"/>
</dbReference>
<dbReference type="InterPro" id="IPR023194">
    <property type="entry name" value="eIF3-like_dom_sf"/>
</dbReference>
<dbReference type="InterPro" id="IPR013906">
    <property type="entry name" value="eIF3j"/>
</dbReference>
<dbReference type="PANTHER" id="PTHR21681">
    <property type="entry name" value="EUKARYOTIC TRANSLATION INITIATION FACTOR 3 SUBUNIT J"/>
    <property type="match status" value="1"/>
</dbReference>
<dbReference type="PANTHER" id="PTHR21681:SF0">
    <property type="entry name" value="EUKARYOTIC TRANSLATION INITIATION FACTOR 3 SUBUNIT J"/>
    <property type="match status" value="1"/>
</dbReference>
<dbReference type="Pfam" id="PF08597">
    <property type="entry name" value="eIF3_subunit"/>
    <property type="match status" value="1"/>
</dbReference>
<evidence type="ECO:0000255" key="1">
    <source>
        <dbReference type="HAMAP-Rule" id="MF_03009"/>
    </source>
</evidence>
<evidence type="ECO:0000256" key="2">
    <source>
        <dbReference type="SAM" id="MobiDB-lite"/>
    </source>
</evidence>
<comment type="function">
    <text evidence="1">Component of the eukaryotic translation initiation factor 3 (eIF-3) complex, which is involved in protein synthesis of a specialized repertoire of mRNAs and, together with other initiation factors, stimulates binding of mRNA and methionyl-tRNAi to the 40S ribosome. The eIF-3 complex specifically targets and initiates translation of a subset of mRNAs involved in cell proliferation.</text>
</comment>
<comment type="subunit">
    <text evidence="1">Component of the eukaryotic translation initiation factor 3 (eIF-3) complex.</text>
</comment>
<comment type="subcellular location">
    <subcellularLocation>
        <location evidence="1">Cytoplasm</location>
    </subcellularLocation>
</comment>
<comment type="similarity">
    <text evidence="1">Belongs to the eIF-3 subunit J family.</text>
</comment>
<feature type="chain" id="PRO_0000365150" description="Eukaryotic translation initiation factor 3 subunit J">
    <location>
        <begin position="1"/>
        <end position="266"/>
    </location>
</feature>
<feature type="region of interest" description="Disordered" evidence="2">
    <location>
        <begin position="1"/>
        <end position="142"/>
    </location>
</feature>
<feature type="region of interest" description="Disordered" evidence="2">
    <location>
        <begin position="215"/>
        <end position="243"/>
    </location>
</feature>
<feature type="coiled-coil region" evidence="1">
    <location>
        <begin position="40"/>
        <end position="99"/>
    </location>
</feature>
<feature type="compositionally biased region" description="Acidic residues" evidence="2">
    <location>
        <begin position="26"/>
        <end position="44"/>
    </location>
</feature>
<feature type="compositionally biased region" description="Basic and acidic residues" evidence="2">
    <location>
        <begin position="45"/>
        <end position="65"/>
    </location>
</feature>
<feature type="compositionally biased region" description="Basic and acidic residues" evidence="2">
    <location>
        <begin position="73"/>
        <end position="86"/>
    </location>
</feature>
<feature type="compositionally biased region" description="Acidic residues" evidence="2">
    <location>
        <begin position="87"/>
        <end position="97"/>
    </location>
</feature>
<feature type="compositionally biased region" description="Basic and acidic residues" evidence="2">
    <location>
        <begin position="98"/>
        <end position="118"/>
    </location>
</feature>
<feature type="compositionally biased region" description="Basic and acidic residues" evidence="2">
    <location>
        <begin position="218"/>
        <end position="230"/>
    </location>
</feature>
<protein>
    <recommendedName>
        <fullName evidence="1">Eukaryotic translation initiation factor 3 subunit J</fullName>
        <shortName evidence="1">eIF3j</shortName>
    </recommendedName>
    <alternativeName>
        <fullName>Eukaryotic translation initiation factor 3 30 kDa subunit</fullName>
        <shortName>eIF-3 30 kDa</shortName>
    </alternativeName>
</protein>
<accession>Q0CTT3</accession>
<reference key="1">
    <citation type="submission" date="2005-09" db="EMBL/GenBank/DDBJ databases">
        <title>Annotation of the Aspergillus terreus NIH2624 genome.</title>
        <authorList>
            <person name="Birren B.W."/>
            <person name="Lander E.S."/>
            <person name="Galagan J.E."/>
            <person name="Nusbaum C."/>
            <person name="Devon K."/>
            <person name="Henn M."/>
            <person name="Ma L.-J."/>
            <person name="Jaffe D.B."/>
            <person name="Butler J."/>
            <person name="Alvarez P."/>
            <person name="Gnerre S."/>
            <person name="Grabherr M."/>
            <person name="Kleber M."/>
            <person name="Mauceli E.W."/>
            <person name="Brockman W."/>
            <person name="Rounsley S."/>
            <person name="Young S.K."/>
            <person name="LaButti K."/>
            <person name="Pushparaj V."/>
            <person name="DeCaprio D."/>
            <person name="Crawford M."/>
            <person name="Koehrsen M."/>
            <person name="Engels R."/>
            <person name="Montgomery P."/>
            <person name="Pearson M."/>
            <person name="Howarth C."/>
            <person name="Larson L."/>
            <person name="Luoma S."/>
            <person name="White J."/>
            <person name="Alvarado L."/>
            <person name="Kodira C.D."/>
            <person name="Zeng Q."/>
            <person name="Oleary S."/>
            <person name="Yandava C."/>
            <person name="Denning D.W."/>
            <person name="Nierman W.C."/>
            <person name="Milne T."/>
            <person name="Madden K."/>
        </authorList>
    </citation>
    <scope>NUCLEOTIDE SEQUENCE [LARGE SCALE GENOMIC DNA]</scope>
    <source>
        <strain>NIH 2624 / FGSC A1156</strain>
    </source>
</reference>
<organism>
    <name type="scientific">Aspergillus terreus (strain NIH 2624 / FGSC A1156)</name>
    <dbReference type="NCBI Taxonomy" id="341663"/>
    <lineage>
        <taxon>Eukaryota</taxon>
        <taxon>Fungi</taxon>
        <taxon>Dikarya</taxon>
        <taxon>Ascomycota</taxon>
        <taxon>Pezizomycotina</taxon>
        <taxon>Eurotiomycetes</taxon>
        <taxon>Eurotiomycetidae</taxon>
        <taxon>Eurotiales</taxon>
        <taxon>Aspergillaceae</taxon>
        <taxon>Aspergillus</taxon>
        <taxon>Aspergillus subgen. Circumdati</taxon>
    </lineage>
</organism>
<keyword id="KW-0175">Coiled coil</keyword>
<keyword id="KW-0963">Cytoplasm</keyword>
<keyword id="KW-0396">Initiation factor</keyword>
<keyword id="KW-0648">Protein biosynthesis</keyword>
<keyword id="KW-1185">Reference proteome</keyword>